<gene>
    <name evidence="1" type="primary">rplX</name>
    <name type="ordered locus">Neut_0569</name>
</gene>
<feature type="chain" id="PRO_0000355699" description="Large ribosomal subunit protein uL24">
    <location>
        <begin position="1"/>
        <end position="107"/>
    </location>
</feature>
<reference key="1">
    <citation type="journal article" date="2007" name="Environ. Microbiol.">
        <title>Whole-genome analysis of the ammonia-oxidizing bacterium, Nitrosomonas eutropha C91: implications for niche adaptation.</title>
        <authorList>
            <person name="Stein L.Y."/>
            <person name="Arp D.J."/>
            <person name="Berube P.M."/>
            <person name="Chain P.S."/>
            <person name="Hauser L."/>
            <person name="Jetten M.S."/>
            <person name="Klotz M.G."/>
            <person name="Larimer F.W."/>
            <person name="Norton J.M."/>
            <person name="Op den Camp H.J.M."/>
            <person name="Shin M."/>
            <person name="Wei X."/>
        </authorList>
    </citation>
    <scope>NUCLEOTIDE SEQUENCE [LARGE SCALE GENOMIC DNA]</scope>
    <source>
        <strain>DSM 101675 / C91 / Nm57</strain>
    </source>
</reference>
<dbReference type="EMBL" id="CP000450">
    <property type="protein sequence ID" value="ABI58841.1"/>
    <property type="molecule type" value="Genomic_DNA"/>
</dbReference>
<dbReference type="SMR" id="Q0AII5"/>
<dbReference type="STRING" id="335283.Neut_0569"/>
<dbReference type="KEGG" id="net:Neut_0569"/>
<dbReference type="eggNOG" id="COG0198">
    <property type="taxonomic scope" value="Bacteria"/>
</dbReference>
<dbReference type="HOGENOM" id="CLU_093315_2_2_4"/>
<dbReference type="Proteomes" id="UP000001966">
    <property type="component" value="Chromosome"/>
</dbReference>
<dbReference type="GO" id="GO:1990904">
    <property type="term" value="C:ribonucleoprotein complex"/>
    <property type="evidence" value="ECO:0007669"/>
    <property type="project" value="UniProtKB-KW"/>
</dbReference>
<dbReference type="GO" id="GO:0005840">
    <property type="term" value="C:ribosome"/>
    <property type="evidence" value="ECO:0007669"/>
    <property type="project" value="UniProtKB-KW"/>
</dbReference>
<dbReference type="GO" id="GO:0019843">
    <property type="term" value="F:rRNA binding"/>
    <property type="evidence" value="ECO:0007669"/>
    <property type="project" value="UniProtKB-UniRule"/>
</dbReference>
<dbReference type="GO" id="GO:0003735">
    <property type="term" value="F:structural constituent of ribosome"/>
    <property type="evidence" value="ECO:0007669"/>
    <property type="project" value="InterPro"/>
</dbReference>
<dbReference type="GO" id="GO:0006412">
    <property type="term" value="P:translation"/>
    <property type="evidence" value="ECO:0007669"/>
    <property type="project" value="UniProtKB-UniRule"/>
</dbReference>
<dbReference type="CDD" id="cd06089">
    <property type="entry name" value="KOW_RPL26"/>
    <property type="match status" value="1"/>
</dbReference>
<dbReference type="Gene3D" id="2.30.30.30">
    <property type="match status" value="1"/>
</dbReference>
<dbReference type="HAMAP" id="MF_01326_B">
    <property type="entry name" value="Ribosomal_uL24_B"/>
    <property type="match status" value="1"/>
</dbReference>
<dbReference type="InterPro" id="IPR014722">
    <property type="entry name" value="Rib_uL2_dom2"/>
</dbReference>
<dbReference type="InterPro" id="IPR003256">
    <property type="entry name" value="Ribosomal_uL24"/>
</dbReference>
<dbReference type="InterPro" id="IPR041988">
    <property type="entry name" value="Ribosomal_uL24_KOW"/>
</dbReference>
<dbReference type="InterPro" id="IPR008991">
    <property type="entry name" value="Translation_prot_SH3-like_sf"/>
</dbReference>
<dbReference type="NCBIfam" id="TIGR01079">
    <property type="entry name" value="rplX_bact"/>
    <property type="match status" value="1"/>
</dbReference>
<dbReference type="PANTHER" id="PTHR12903">
    <property type="entry name" value="MITOCHONDRIAL RIBOSOMAL PROTEIN L24"/>
    <property type="match status" value="1"/>
</dbReference>
<dbReference type="Pfam" id="PF17136">
    <property type="entry name" value="ribosomal_L24"/>
    <property type="match status" value="1"/>
</dbReference>
<dbReference type="SUPFAM" id="SSF50104">
    <property type="entry name" value="Translation proteins SH3-like domain"/>
    <property type="match status" value="1"/>
</dbReference>
<evidence type="ECO:0000255" key="1">
    <source>
        <dbReference type="HAMAP-Rule" id="MF_01326"/>
    </source>
</evidence>
<evidence type="ECO:0000305" key="2"/>
<name>RL24_NITEC</name>
<keyword id="KW-0687">Ribonucleoprotein</keyword>
<keyword id="KW-0689">Ribosomal protein</keyword>
<keyword id="KW-0694">RNA-binding</keyword>
<keyword id="KW-0699">rRNA-binding</keyword>
<accession>Q0AII5</accession>
<proteinExistence type="inferred from homology"/>
<protein>
    <recommendedName>
        <fullName evidence="1">Large ribosomal subunit protein uL24</fullName>
    </recommendedName>
    <alternativeName>
        <fullName evidence="2">50S ribosomal protein L24</fullName>
    </alternativeName>
</protein>
<comment type="function">
    <text evidence="1">One of two assembly initiator proteins, it binds directly to the 5'-end of the 23S rRNA, where it nucleates assembly of the 50S subunit.</text>
</comment>
<comment type="function">
    <text evidence="1">One of the proteins that surrounds the polypeptide exit tunnel on the outside of the subunit.</text>
</comment>
<comment type="subunit">
    <text evidence="1">Part of the 50S ribosomal subunit.</text>
</comment>
<comment type="similarity">
    <text evidence="1">Belongs to the universal ribosomal protein uL24 family.</text>
</comment>
<organism>
    <name type="scientific">Nitrosomonas eutropha (strain DSM 101675 / C91 / Nm57)</name>
    <dbReference type="NCBI Taxonomy" id="335283"/>
    <lineage>
        <taxon>Bacteria</taxon>
        <taxon>Pseudomonadati</taxon>
        <taxon>Pseudomonadota</taxon>
        <taxon>Betaproteobacteria</taxon>
        <taxon>Nitrosomonadales</taxon>
        <taxon>Nitrosomonadaceae</taxon>
        <taxon>Nitrosomonas</taxon>
    </lineage>
</organism>
<sequence>MAMKKIRKGDNVIILSGKDKGKQSTVIKFESVEKVIVRDVNRVKSHVKPNPSKNIVGGIVEIEKPIHVSNIAIFNSDKNKADRVGFRFNESGNKVRYFKSDGTLIDL</sequence>